<keyword id="KW-0002">3D-structure</keyword>
<keyword id="KW-1015">Disulfide bond</keyword>
<keyword id="KW-1170">Fusion of virus membrane with host endosomal membrane</keyword>
<keyword id="KW-1168">Fusion of virus membrane with host membrane</keyword>
<keyword id="KW-0325">Glycoprotein</keyword>
<keyword id="KW-0348">Hemagglutinin</keyword>
<keyword id="KW-1032">Host cell membrane</keyword>
<keyword id="KW-1043">Host membrane</keyword>
<keyword id="KW-0945">Host-virus interaction</keyword>
<keyword id="KW-0449">Lipoprotein</keyword>
<keyword id="KW-0472">Membrane</keyword>
<keyword id="KW-0564">Palmitate</keyword>
<keyword id="KW-0812">Transmembrane</keyword>
<keyword id="KW-1161">Viral attachment to host cell</keyword>
<keyword id="KW-0261">Viral envelope protein</keyword>
<keyword id="KW-1162">Viral penetration into host cytoplasm</keyword>
<keyword id="KW-0946">Virion</keyword>
<keyword id="KW-1160">Virus entry into host cell</keyword>
<proteinExistence type="evidence at protein level"/>
<comment type="function">
    <text>Binds to sialic acid-containing receptors on the cell surface, bringing about the attachment of the virus particle to the cell. Plays a major role in the determination of host range restriction and virulence. Class I viral fusion protein. Responsible for penetration of the virus into the cell cytoplasm by mediating the fusion of the membrane of the endocytosed virus particle with the endosomal membrane. Low pH in endosomes induce an irreversible conformational change in HA2, releasing the fusion hydrophobic peptide. Several trimers are required to form a competent fusion pore.</text>
</comment>
<comment type="subunit">
    <text>Homotrimer of disulfide-linked HA1-HA2.</text>
</comment>
<comment type="subcellular location">
    <subcellularLocation>
        <location evidence="3">Virion membrane</location>
        <topology evidence="3">Single-pass type I membrane protein</topology>
    </subcellularLocation>
    <subcellularLocation>
        <location>Host apical cell membrane</location>
        <topology>Single-pass type I membrane protein</topology>
    </subcellularLocation>
    <text>Targeted to the apical plasma membrane in epithelial polarized cells through a signal present in the transmembrane domain. Associated with glycosphingolipid- and cholesterol-enriched detergent-resistant lipid rafts.</text>
</comment>
<comment type="PTM">
    <text evidence="1">In natural infection, inactive HA is matured into HA1 and HA2 outside the cell by one or more trypsin-like, arginine-specific endoprotease secreted by the bronchial epithelial cells. One identified protease that may be involved in this process is secreted in lungs by club cells (By similarity).</text>
</comment>
<comment type="PTM">
    <text evidence="1">Palmitoylated.</text>
</comment>
<comment type="miscellaneous">
    <text>Major glycoprotein, comprises over 80% of the envelope proteins present in virus particle.</text>
</comment>
<comment type="miscellaneous">
    <text>The extent of infection into host organism is determined by HA. Influenza viruses bud from the apical surface of polarized epithelial cells (e.g. bronchial epithelial cells) into lumen of lungs and are therefore usually pneumotropic. The reason is that HA is cleaved by tryptase clara which is restricted to lungs. However, HAs of H5 and H7 pantropic avian viruses subtypes can be cleaved by furin and subtilisin-type enzymes, allowing the virus to grow in other organs than lungs.</text>
</comment>
<comment type="miscellaneous">
    <text>The influenza B genome consist of 8 RNA segments. Genetic variation of hemagglutinin and/or neuraminidase genes results in the emergence of new influenza strains. The mechanism of variation can be the result of point mutations or the result of genetic reassortment between segments of two different strains.</text>
</comment>
<comment type="similarity">
    <text evidence="3">Belongs to the influenza viruses hemagglutinin family.</text>
</comment>
<feature type="chain" id="PRO_0000039141" description="Hemagglutinin HA1 chain">
    <location>
        <begin position="1"/>
        <end position="345"/>
    </location>
</feature>
<feature type="glycosylation site" description="N-linked (GlcNAc...) asparagine; by host" evidence="2">
    <location>
        <position position="25"/>
    </location>
</feature>
<feature type="glycosylation site" description="N-linked (GlcNAc...) asparagine; by host" evidence="2">
    <location>
        <position position="59"/>
    </location>
</feature>
<feature type="glycosylation site" description="N-linked (GlcNAc...) asparagine; by host" evidence="2">
    <location>
        <position position="145"/>
    </location>
</feature>
<feature type="glycosylation site" description="N-linked (GlcNAc...) asparagine; by host" evidence="2">
    <location>
        <position position="164"/>
    </location>
</feature>
<feature type="glycosylation site" description="N-linked (GlcNAc...) asparagine; by host" evidence="2">
    <location>
        <position position="231"/>
    </location>
</feature>
<feature type="glycosylation site" description="N-linked (GlcNAc...) asparagine; by host" evidence="2">
    <location>
        <position position="302"/>
    </location>
</feature>
<feature type="glycosylation site" description="N-linked (GlcNAc...) asparagine; by host" evidence="2">
    <location>
        <position position="331"/>
    </location>
</feature>
<feature type="non-terminal residue">
    <location>
        <position position="345"/>
    </location>
</feature>
<protein>
    <recommendedName>
        <fullName>Hemagglutinin</fullName>
    </recommendedName>
    <component>
        <recommendedName>
            <fullName>Hemagglutinin HA1 chain</fullName>
        </recommendedName>
    </component>
</protein>
<reference key="1">
    <citation type="journal article" date="1990" name="J. Virol.">
        <title>Evolutionary pattern of the hemagglutinin gene of influenza B viruses isolated in Japan: cocirculating lineages in the same epidemic season.</title>
        <authorList>
            <person name="Kanegae Y."/>
            <person name="Sugita S."/>
            <person name="Endo A."/>
            <person name="Ishida M."/>
            <person name="Senya S."/>
            <person name="Osako K."/>
            <person name="Nerome K."/>
            <person name="Oya A."/>
        </authorList>
    </citation>
    <scope>NUCLEOTIDE SEQUENCE [GENOMIC RNA]</scope>
</reference>
<evidence type="ECO:0000250" key="1"/>
<evidence type="ECO:0000255" key="2"/>
<evidence type="ECO:0000305" key="3"/>
<organismHost>
    <name type="scientific">Homo sapiens</name>
    <name type="common">Human</name>
    <dbReference type="NCBI Taxonomy" id="9606"/>
</organismHost>
<accession>P18880</accession>
<organism>
    <name type="scientific">Influenza B virus (strain B/Yamagata/16/1988)</name>
    <dbReference type="NCBI Taxonomy" id="416674"/>
    <lineage>
        <taxon>Viruses</taxon>
        <taxon>Riboviria</taxon>
        <taxon>Orthornavirae</taxon>
        <taxon>Negarnaviricota</taxon>
        <taxon>Polyploviricotina</taxon>
        <taxon>Insthoviricetes</taxon>
        <taxon>Articulavirales</taxon>
        <taxon>Orthomyxoviridae</taxon>
        <taxon>Betainfluenzavirus</taxon>
        <taxon>Betainfluenzavirus influenzae</taxon>
        <taxon>Influenza B virus</taxon>
    </lineage>
</organism>
<name>HEMA_INBYB</name>
<sequence>DRICTGITSSNSPHVVKTATQGEVNVTGVIPLTTTPTKSHFANLKGTKTRGKLCPNCLNCTDLDVALGRPMCMGTIPSAKASILHEVRPVTSGCFPIMHDRTKIRQLPNLLRGYENIRLSTHNVINAERAPGGPYRLGTSGSCPNVTSRNGFFATMAWAVPRDNKTATNPLTVEVPYICTKGEDQITVWGFHSDNKAQMKNLYGDSNPQKFTSSANGVTTHYVSQIGDFPNQTEDGGLPQSGRIVVDYMVQKPGKTGTIVYQRGVLLPQKVWCASGRSKVIKGSLPLIGEADCLHEKYGGLNKSKPYYTGEHAKAIGNCPIWVKTPLKLANGTKYRPPAKLLKER</sequence>
<dbReference type="EMBL" id="M36105">
    <property type="protein sequence ID" value="AAA43779.1"/>
    <property type="molecule type" value="Genomic_RNA"/>
</dbReference>
<dbReference type="PDB" id="7KQI">
    <property type="method" value="X-ray"/>
    <property type="resolution" value="4.20 A"/>
    <property type="chains" value="B=31-328"/>
</dbReference>
<dbReference type="PDBsum" id="7KQI"/>
<dbReference type="SMR" id="P18880"/>
<dbReference type="GlyCosmos" id="P18880">
    <property type="glycosylation" value="7 sites, No reported glycans"/>
</dbReference>
<dbReference type="GO" id="GO:0020002">
    <property type="term" value="C:host cell plasma membrane"/>
    <property type="evidence" value="ECO:0007669"/>
    <property type="project" value="UniProtKB-SubCell"/>
</dbReference>
<dbReference type="GO" id="GO:0016020">
    <property type="term" value="C:membrane"/>
    <property type="evidence" value="ECO:0007669"/>
    <property type="project" value="UniProtKB-KW"/>
</dbReference>
<dbReference type="GO" id="GO:0019031">
    <property type="term" value="C:viral envelope"/>
    <property type="evidence" value="ECO:0007669"/>
    <property type="project" value="UniProtKB-KW"/>
</dbReference>
<dbReference type="GO" id="GO:0055036">
    <property type="term" value="C:virion membrane"/>
    <property type="evidence" value="ECO:0007669"/>
    <property type="project" value="UniProtKB-SubCell"/>
</dbReference>
<dbReference type="GO" id="GO:0046789">
    <property type="term" value="F:host cell surface receptor binding"/>
    <property type="evidence" value="ECO:0007669"/>
    <property type="project" value="InterPro"/>
</dbReference>
<dbReference type="GO" id="GO:0039654">
    <property type="term" value="P:fusion of virus membrane with host endosome membrane"/>
    <property type="evidence" value="ECO:0007669"/>
    <property type="project" value="UniProtKB-KW"/>
</dbReference>
<dbReference type="GO" id="GO:0019064">
    <property type="term" value="P:fusion of virus membrane with host plasma membrane"/>
    <property type="evidence" value="ECO:0007669"/>
    <property type="project" value="InterPro"/>
</dbReference>
<dbReference type="GO" id="GO:0046718">
    <property type="term" value="P:symbiont entry into host cell"/>
    <property type="evidence" value="ECO:0007669"/>
    <property type="project" value="UniProtKB-KW"/>
</dbReference>
<dbReference type="GO" id="GO:0019062">
    <property type="term" value="P:virion attachment to host cell"/>
    <property type="evidence" value="ECO:0007669"/>
    <property type="project" value="UniProtKB-KW"/>
</dbReference>
<dbReference type="Gene3D" id="3.90.209.20">
    <property type="match status" value="1"/>
</dbReference>
<dbReference type="Gene3D" id="2.10.77.10">
    <property type="entry name" value="Hemagglutinin Chain A, Domain 2"/>
    <property type="match status" value="1"/>
</dbReference>
<dbReference type="InterPro" id="IPR008980">
    <property type="entry name" value="Capsid_hemagglutn"/>
</dbReference>
<dbReference type="InterPro" id="IPR013828">
    <property type="entry name" value="Hemagglutn_HA1_a/b_dom_sf"/>
</dbReference>
<dbReference type="InterPro" id="IPR001364">
    <property type="entry name" value="Hemagglutn_influenz_A/B"/>
</dbReference>
<dbReference type="Pfam" id="PF00509">
    <property type="entry name" value="Hemagglutinin"/>
    <property type="match status" value="1"/>
</dbReference>
<dbReference type="SUPFAM" id="SSF49818">
    <property type="entry name" value="Viral protein domain"/>
    <property type="match status" value="1"/>
</dbReference>
<gene>
    <name type="primary">HA</name>
</gene>